<reference key="1">
    <citation type="submission" date="2005-08" db="EMBL/GenBank/DDBJ databases">
        <title>Complete sequence of chromosome 1 of Nitrosospira multiformis ATCC 25196.</title>
        <authorList>
            <person name="Copeland A."/>
            <person name="Lucas S."/>
            <person name="Lapidus A."/>
            <person name="Barry K."/>
            <person name="Detter J.C."/>
            <person name="Glavina T."/>
            <person name="Hammon N."/>
            <person name="Israni S."/>
            <person name="Pitluck S."/>
            <person name="Chain P."/>
            <person name="Malfatti S."/>
            <person name="Shin M."/>
            <person name="Vergez L."/>
            <person name="Schmutz J."/>
            <person name="Larimer F."/>
            <person name="Land M."/>
            <person name="Hauser L."/>
            <person name="Kyrpides N."/>
            <person name="Lykidis A."/>
            <person name="Richardson P."/>
        </authorList>
    </citation>
    <scope>NUCLEOTIDE SEQUENCE [LARGE SCALE GENOMIC DNA]</scope>
    <source>
        <strain>ATCC 25196 / NCIMB 11849 / C 71</strain>
    </source>
</reference>
<organism>
    <name type="scientific">Nitrosospira multiformis (strain ATCC 25196 / NCIMB 11849 / C 71)</name>
    <dbReference type="NCBI Taxonomy" id="323848"/>
    <lineage>
        <taxon>Bacteria</taxon>
        <taxon>Pseudomonadati</taxon>
        <taxon>Pseudomonadota</taxon>
        <taxon>Betaproteobacteria</taxon>
        <taxon>Nitrosomonadales</taxon>
        <taxon>Nitrosomonadaceae</taxon>
        <taxon>Nitrosospira</taxon>
    </lineage>
</organism>
<feature type="chain" id="PRO_0000229257" description="Ribosome maturation factor RimP">
    <location>
        <begin position="1"/>
        <end position="142"/>
    </location>
</feature>
<proteinExistence type="inferred from homology"/>
<dbReference type="EMBL" id="CP000103">
    <property type="protein sequence ID" value="ABB75161.1"/>
    <property type="molecule type" value="Genomic_DNA"/>
</dbReference>
<dbReference type="RefSeq" id="WP_011381181.1">
    <property type="nucleotide sequence ID" value="NC_007614.1"/>
</dbReference>
<dbReference type="SMR" id="Q2Y7W0"/>
<dbReference type="STRING" id="323848.Nmul_A1866"/>
<dbReference type="KEGG" id="nmu:Nmul_A1866"/>
<dbReference type="eggNOG" id="COG0779">
    <property type="taxonomic scope" value="Bacteria"/>
</dbReference>
<dbReference type="HOGENOM" id="CLU_070525_1_0_4"/>
<dbReference type="OrthoDB" id="9805006at2"/>
<dbReference type="Proteomes" id="UP000002718">
    <property type="component" value="Chromosome"/>
</dbReference>
<dbReference type="GO" id="GO:0005829">
    <property type="term" value="C:cytosol"/>
    <property type="evidence" value="ECO:0007669"/>
    <property type="project" value="TreeGrafter"/>
</dbReference>
<dbReference type="GO" id="GO:0000028">
    <property type="term" value="P:ribosomal small subunit assembly"/>
    <property type="evidence" value="ECO:0007669"/>
    <property type="project" value="TreeGrafter"/>
</dbReference>
<dbReference type="GO" id="GO:0006412">
    <property type="term" value="P:translation"/>
    <property type="evidence" value="ECO:0007669"/>
    <property type="project" value="TreeGrafter"/>
</dbReference>
<dbReference type="CDD" id="cd01734">
    <property type="entry name" value="YlxS_C"/>
    <property type="match status" value="1"/>
</dbReference>
<dbReference type="Gene3D" id="2.30.30.180">
    <property type="entry name" value="Ribosome maturation factor RimP, C-terminal domain"/>
    <property type="match status" value="1"/>
</dbReference>
<dbReference type="Gene3D" id="3.30.300.70">
    <property type="entry name" value="RimP-like superfamily, N-terminal"/>
    <property type="match status" value="1"/>
</dbReference>
<dbReference type="HAMAP" id="MF_01077">
    <property type="entry name" value="RimP"/>
    <property type="match status" value="1"/>
</dbReference>
<dbReference type="InterPro" id="IPR003728">
    <property type="entry name" value="Ribosome_maturation_RimP"/>
</dbReference>
<dbReference type="InterPro" id="IPR028998">
    <property type="entry name" value="RimP_C"/>
</dbReference>
<dbReference type="InterPro" id="IPR036847">
    <property type="entry name" value="RimP_C_sf"/>
</dbReference>
<dbReference type="InterPro" id="IPR028989">
    <property type="entry name" value="RimP_N"/>
</dbReference>
<dbReference type="InterPro" id="IPR035956">
    <property type="entry name" value="RimP_N_sf"/>
</dbReference>
<dbReference type="NCBIfam" id="NF000929">
    <property type="entry name" value="PRK00092.2-1"/>
    <property type="match status" value="1"/>
</dbReference>
<dbReference type="PANTHER" id="PTHR33867">
    <property type="entry name" value="RIBOSOME MATURATION FACTOR RIMP"/>
    <property type="match status" value="1"/>
</dbReference>
<dbReference type="PANTHER" id="PTHR33867:SF1">
    <property type="entry name" value="RIBOSOME MATURATION FACTOR RIMP"/>
    <property type="match status" value="1"/>
</dbReference>
<dbReference type="Pfam" id="PF17384">
    <property type="entry name" value="DUF150_C"/>
    <property type="match status" value="1"/>
</dbReference>
<dbReference type="Pfam" id="PF02576">
    <property type="entry name" value="RimP_N"/>
    <property type="match status" value="1"/>
</dbReference>
<dbReference type="SUPFAM" id="SSF74942">
    <property type="entry name" value="YhbC-like, C-terminal domain"/>
    <property type="match status" value="1"/>
</dbReference>
<dbReference type="SUPFAM" id="SSF75420">
    <property type="entry name" value="YhbC-like, N-terminal domain"/>
    <property type="match status" value="1"/>
</dbReference>
<comment type="function">
    <text evidence="1">Required for maturation of 30S ribosomal subunits.</text>
</comment>
<comment type="subcellular location">
    <subcellularLocation>
        <location evidence="1">Cytoplasm</location>
    </subcellularLocation>
</comment>
<comment type="similarity">
    <text evidence="1">Belongs to the RimP family.</text>
</comment>
<evidence type="ECO:0000255" key="1">
    <source>
        <dbReference type="HAMAP-Rule" id="MF_01077"/>
    </source>
</evidence>
<name>RIMP_NITMU</name>
<gene>
    <name evidence="1" type="primary">rimP</name>
    <name type="ordered locus">Nmul_A1866</name>
</gene>
<protein>
    <recommendedName>
        <fullName evidence="1">Ribosome maturation factor RimP</fullName>
    </recommendedName>
</protein>
<sequence>MDLYELLEPTLAGLGYELVDLERSPGGKLLRIFIDKPGGVNVDDCVTVSNHLSRFLAVENVDYDRLEVSSPGLDRPLKKTADFIRFAGESVKLRLRVALQGQRNFVGILREVKDGILKLEVDGKMLDLELTNLEKVRLVPKL</sequence>
<keyword id="KW-0963">Cytoplasm</keyword>
<keyword id="KW-1185">Reference proteome</keyword>
<keyword id="KW-0690">Ribosome biogenesis</keyword>
<accession>Q2Y7W0</accession>